<reference key="1">
    <citation type="submission" date="2008-04" db="EMBL/GenBank/DDBJ databases">
        <title>Complete sequence of Yersinia pseudotuberculosis PB1/+.</title>
        <authorList>
            <person name="Copeland A."/>
            <person name="Lucas S."/>
            <person name="Lapidus A."/>
            <person name="Glavina del Rio T."/>
            <person name="Dalin E."/>
            <person name="Tice H."/>
            <person name="Bruce D."/>
            <person name="Goodwin L."/>
            <person name="Pitluck S."/>
            <person name="Munk A.C."/>
            <person name="Brettin T."/>
            <person name="Detter J.C."/>
            <person name="Han C."/>
            <person name="Tapia R."/>
            <person name="Schmutz J."/>
            <person name="Larimer F."/>
            <person name="Land M."/>
            <person name="Hauser L."/>
            <person name="Challacombe J.F."/>
            <person name="Green L."/>
            <person name="Lindler L.E."/>
            <person name="Nikolich M.P."/>
            <person name="Richardson P."/>
        </authorList>
    </citation>
    <scope>NUCLEOTIDE SEQUENCE [LARGE SCALE GENOMIC DNA]</scope>
    <source>
        <strain>PB1/+</strain>
    </source>
</reference>
<accession>B2K4Z9</accession>
<organism>
    <name type="scientific">Yersinia pseudotuberculosis serotype IB (strain PB1/+)</name>
    <dbReference type="NCBI Taxonomy" id="502801"/>
    <lineage>
        <taxon>Bacteria</taxon>
        <taxon>Pseudomonadati</taxon>
        <taxon>Pseudomonadota</taxon>
        <taxon>Gammaproteobacteria</taxon>
        <taxon>Enterobacterales</taxon>
        <taxon>Yersiniaceae</taxon>
        <taxon>Yersinia</taxon>
    </lineage>
</organism>
<gene>
    <name evidence="1" type="primary">aroE</name>
    <name type="ordered locus">YPTS_3852</name>
</gene>
<name>AROE_YERPB</name>
<proteinExistence type="inferred from homology"/>
<comment type="function">
    <text evidence="1">Involved in the biosynthesis of the chorismate, which leads to the biosynthesis of aromatic amino acids. Catalyzes the reversible NADPH linked reduction of 3-dehydroshikimate (DHSA) to yield shikimate (SA).</text>
</comment>
<comment type="catalytic activity">
    <reaction evidence="1">
        <text>shikimate + NADP(+) = 3-dehydroshikimate + NADPH + H(+)</text>
        <dbReference type="Rhea" id="RHEA:17737"/>
        <dbReference type="ChEBI" id="CHEBI:15378"/>
        <dbReference type="ChEBI" id="CHEBI:16630"/>
        <dbReference type="ChEBI" id="CHEBI:36208"/>
        <dbReference type="ChEBI" id="CHEBI:57783"/>
        <dbReference type="ChEBI" id="CHEBI:58349"/>
        <dbReference type="EC" id="1.1.1.25"/>
    </reaction>
</comment>
<comment type="pathway">
    <text evidence="1">Metabolic intermediate biosynthesis; chorismate biosynthesis; chorismate from D-erythrose 4-phosphate and phosphoenolpyruvate: step 4/7.</text>
</comment>
<comment type="subunit">
    <text evidence="1">Homodimer.</text>
</comment>
<comment type="similarity">
    <text evidence="1">Belongs to the shikimate dehydrogenase family.</text>
</comment>
<keyword id="KW-0028">Amino-acid biosynthesis</keyword>
<keyword id="KW-0057">Aromatic amino acid biosynthesis</keyword>
<keyword id="KW-0521">NADP</keyword>
<keyword id="KW-0560">Oxidoreductase</keyword>
<evidence type="ECO:0000255" key="1">
    <source>
        <dbReference type="HAMAP-Rule" id="MF_00222"/>
    </source>
</evidence>
<dbReference type="EC" id="1.1.1.25" evidence="1"/>
<dbReference type="EMBL" id="CP001048">
    <property type="protein sequence ID" value="ACC90801.1"/>
    <property type="molecule type" value="Genomic_DNA"/>
</dbReference>
<dbReference type="RefSeq" id="WP_002209026.1">
    <property type="nucleotide sequence ID" value="NZ_CP009780.1"/>
</dbReference>
<dbReference type="SMR" id="B2K4Z9"/>
<dbReference type="GeneID" id="57974357"/>
<dbReference type="KEGG" id="ypb:YPTS_3852"/>
<dbReference type="PATRIC" id="fig|502801.10.peg.3317"/>
<dbReference type="UniPathway" id="UPA00053">
    <property type="reaction ID" value="UER00087"/>
</dbReference>
<dbReference type="GO" id="GO:0005829">
    <property type="term" value="C:cytosol"/>
    <property type="evidence" value="ECO:0007669"/>
    <property type="project" value="TreeGrafter"/>
</dbReference>
<dbReference type="GO" id="GO:0050661">
    <property type="term" value="F:NADP binding"/>
    <property type="evidence" value="ECO:0007669"/>
    <property type="project" value="InterPro"/>
</dbReference>
<dbReference type="GO" id="GO:0004764">
    <property type="term" value="F:shikimate 3-dehydrogenase (NADP+) activity"/>
    <property type="evidence" value="ECO:0007669"/>
    <property type="project" value="UniProtKB-UniRule"/>
</dbReference>
<dbReference type="GO" id="GO:0008652">
    <property type="term" value="P:amino acid biosynthetic process"/>
    <property type="evidence" value="ECO:0007669"/>
    <property type="project" value="UniProtKB-KW"/>
</dbReference>
<dbReference type="GO" id="GO:0009073">
    <property type="term" value="P:aromatic amino acid family biosynthetic process"/>
    <property type="evidence" value="ECO:0007669"/>
    <property type="project" value="UniProtKB-KW"/>
</dbReference>
<dbReference type="GO" id="GO:0009423">
    <property type="term" value="P:chorismate biosynthetic process"/>
    <property type="evidence" value="ECO:0007669"/>
    <property type="project" value="UniProtKB-UniRule"/>
</dbReference>
<dbReference type="GO" id="GO:0019632">
    <property type="term" value="P:shikimate metabolic process"/>
    <property type="evidence" value="ECO:0007669"/>
    <property type="project" value="InterPro"/>
</dbReference>
<dbReference type="CDD" id="cd01065">
    <property type="entry name" value="NAD_bind_Shikimate_DH"/>
    <property type="match status" value="1"/>
</dbReference>
<dbReference type="FunFam" id="3.40.50.10860:FF:000006">
    <property type="entry name" value="Shikimate dehydrogenase (NADP(+))"/>
    <property type="match status" value="1"/>
</dbReference>
<dbReference type="FunFam" id="3.40.50.720:FF:000104">
    <property type="entry name" value="Shikimate dehydrogenase (NADP(+))"/>
    <property type="match status" value="1"/>
</dbReference>
<dbReference type="Gene3D" id="3.40.50.10860">
    <property type="entry name" value="Leucine Dehydrogenase, chain A, domain 1"/>
    <property type="match status" value="1"/>
</dbReference>
<dbReference type="Gene3D" id="3.40.50.720">
    <property type="entry name" value="NAD(P)-binding Rossmann-like Domain"/>
    <property type="match status" value="1"/>
</dbReference>
<dbReference type="HAMAP" id="MF_00222">
    <property type="entry name" value="Shikimate_DH_AroE"/>
    <property type="match status" value="1"/>
</dbReference>
<dbReference type="InterPro" id="IPR046346">
    <property type="entry name" value="Aminoacid_DH-like_N_sf"/>
</dbReference>
<dbReference type="InterPro" id="IPR036291">
    <property type="entry name" value="NAD(P)-bd_dom_sf"/>
</dbReference>
<dbReference type="InterPro" id="IPR041121">
    <property type="entry name" value="SDH_C"/>
</dbReference>
<dbReference type="InterPro" id="IPR011342">
    <property type="entry name" value="Shikimate_DH"/>
</dbReference>
<dbReference type="InterPro" id="IPR013708">
    <property type="entry name" value="Shikimate_DH-bd_N"/>
</dbReference>
<dbReference type="InterPro" id="IPR022893">
    <property type="entry name" value="Shikimate_DH_fam"/>
</dbReference>
<dbReference type="InterPro" id="IPR006151">
    <property type="entry name" value="Shikm_DH/Glu-tRNA_Rdtase"/>
</dbReference>
<dbReference type="NCBIfam" id="TIGR00507">
    <property type="entry name" value="aroE"/>
    <property type="match status" value="1"/>
</dbReference>
<dbReference type="NCBIfam" id="NF001310">
    <property type="entry name" value="PRK00258.1-2"/>
    <property type="match status" value="1"/>
</dbReference>
<dbReference type="PANTHER" id="PTHR21089:SF1">
    <property type="entry name" value="BIFUNCTIONAL 3-DEHYDROQUINATE DEHYDRATASE_SHIKIMATE DEHYDROGENASE, CHLOROPLASTIC"/>
    <property type="match status" value="1"/>
</dbReference>
<dbReference type="PANTHER" id="PTHR21089">
    <property type="entry name" value="SHIKIMATE DEHYDROGENASE"/>
    <property type="match status" value="1"/>
</dbReference>
<dbReference type="Pfam" id="PF18317">
    <property type="entry name" value="SDH_C"/>
    <property type="match status" value="1"/>
</dbReference>
<dbReference type="Pfam" id="PF01488">
    <property type="entry name" value="Shikimate_DH"/>
    <property type="match status" value="1"/>
</dbReference>
<dbReference type="Pfam" id="PF08501">
    <property type="entry name" value="Shikimate_dh_N"/>
    <property type="match status" value="1"/>
</dbReference>
<dbReference type="SUPFAM" id="SSF53223">
    <property type="entry name" value="Aminoacid dehydrogenase-like, N-terminal domain"/>
    <property type="match status" value="1"/>
</dbReference>
<dbReference type="SUPFAM" id="SSF51735">
    <property type="entry name" value="NAD(P)-binding Rossmann-fold domains"/>
    <property type="match status" value="1"/>
</dbReference>
<sequence length="273" mass="29595">MDQKFAVFGNPISHSKSPRIHTLFSEQTGIEHRYGKVLAPSEAFENTLVSFFADGAQGANITTPFKERAYDQCDELTDRASLAGAVNTIKRLEDGRLLGDNTDGIGLLSDLERQNLIRTTDHILLVGAGGAARGVILPLLSYGCTVVVTNRTHTRAQQLAKVFNHIGDIDVCEMSELAGQRFDLVINATASGLHGEVPNLPAAILTSQTRCYDMFYQAGTTPFLAWAQRLGLADYADGLGMLVGQAAHAFKLWHGVMPEITPVLAQLRSELGK</sequence>
<protein>
    <recommendedName>
        <fullName evidence="1">Shikimate dehydrogenase (NADP(+))</fullName>
        <shortName evidence="1">SDH</shortName>
        <ecNumber evidence="1">1.1.1.25</ecNumber>
    </recommendedName>
</protein>
<feature type="chain" id="PRO_1000100155" description="Shikimate dehydrogenase (NADP(+))">
    <location>
        <begin position="1"/>
        <end position="273"/>
    </location>
</feature>
<feature type="active site" description="Proton acceptor" evidence="1">
    <location>
        <position position="66"/>
    </location>
</feature>
<feature type="binding site" evidence="1">
    <location>
        <begin position="15"/>
        <end position="17"/>
    </location>
    <ligand>
        <name>shikimate</name>
        <dbReference type="ChEBI" id="CHEBI:36208"/>
    </ligand>
</feature>
<feature type="binding site" evidence="1">
    <location>
        <position position="62"/>
    </location>
    <ligand>
        <name>shikimate</name>
        <dbReference type="ChEBI" id="CHEBI:36208"/>
    </ligand>
</feature>
<feature type="binding site" evidence="1">
    <location>
        <position position="78"/>
    </location>
    <ligand>
        <name>NADP(+)</name>
        <dbReference type="ChEBI" id="CHEBI:58349"/>
    </ligand>
</feature>
<feature type="binding site" evidence="1">
    <location>
        <position position="87"/>
    </location>
    <ligand>
        <name>shikimate</name>
        <dbReference type="ChEBI" id="CHEBI:36208"/>
    </ligand>
</feature>
<feature type="binding site" evidence="1">
    <location>
        <position position="103"/>
    </location>
    <ligand>
        <name>shikimate</name>
        <dbReference type="ChEBI" id="CHEBI:36208"/>
    </ligand>
</feature>
<feature type="binding site" evidence="1">
    <location>
        <begin position="127"/>
        <end position="131"/>
    </location>
    <ligand>
        <name>NADP(+)</name>
        <dbReference type="ChEBI" id="CHEBI:58349"/>
    </ligand>
</feature>
<feature type="binding site" evidence="1">
    <location>
        <begin position="150"/>
        <end position="155"/>
    </location>
    <ligand>
        <name>NADP(+)</name>
        <dbReference type="ChEBI" id="CHEBI:58349"/>
    </ligand>
</feature>
<feature type="binding site" evidence="1">
    <location>
        <position position="218"/>
    </location>
    <ligand>
        <name>NADP(+)</name>
        <dbReference type="ChEBI" id="CHEBI:58349"/>
    </ligand>
</feature>
<feature type="binding site" evidence="1">
    <location>
        <position position="238"/>
    </location>
    <ligand>
        <name>NADP(+)</name>
        <dbReference type="ChEBI" id="CHEBI:58349"/>
    </ligand>
</feature>